<accession>Q96A56</accession>
<accession>B2RCE5</accession>
<accession>Q969R9</accession>
<organism>
    <name type="scientific">Homo sapiens</name>
    <name type="common">Human</name>
    <dbReference type="NCBI Taxonomy" id="9606"/>
    <lineage>
        <taxon>Eukaryota</taxon>
        <taxon>Metazoa</taxon>
        <taxon>Chordata</taxon>
        <taxon>Craniata</taxon>
        <taxon>Vertebrata</taxon>
        <taxon>Euteleostomi</taxon>
        <taxon>Mammalia</taxon>
        <taxon>Eutheria</taxon>
        <taxon>Euarchontoglires</taxon>
        <taxon>Primates</taxon>
        <taxon>Haplorrhini</taxon>
        <taxon>Catarrhini</taxon>
        <taxon>Hominidae</taxon>
        <taxon>Homo</taxon>
    </lineage>
</organism>
<reference key="1">
    <citation type="journal article" date="2001" name="Mol. Cell">
        <title>p53DINP1, a p53-inducible gene, regulate p53-dependent apoptosis.</title>
        <authorList>
            <person name="Okamura S."/>
            <person name="Arakawa H."/>
            <person name="Tanaka T."/>
            <person name="Nakanishi H."/>
            <person name="Ng C.C."/>
            <person name="Taya Y."/>
            <person name="Monden M."/>
            <person name="Nakamura Y."/>
        </authorList>
    </citation>
    <scope>NUCLEOTIDE SEQUENCE [GENOMIC DNA / MRNA] (ISOFORMS 1 AND 2)</scope>
    <scope>SUBCELLULAR LOCATION</scope>
    <scope>TISSUE SPECIFICITY</scope>
    <scope>INDUCTION</scope>
    <scope>FUNCTION</scope>
    <source>
        <tissue>Thymus</tissue>
    </source>
</reference>
<reference key="2">
    <citation type="journal article" date="2002" name="Eur. J. Cell Biol.">
        <title>p53-dependent expression of the stress-induced protein (SIP).</title>
        <authorList>
            <person name="Tomasini R."/>
            <person name="Azizi Samir A.L."/>
            <person name="Pebusque M.-J."/>
            <person name="Calvo E.L."/>
            <person name="Totaro S."/>
            <person name="Dagorn J.-C."/>
            <person name="Dusetti N.J."/>
            <person name="Iovanna J.L."/>
        </authorList>
    </citation>
    <scope>NUCLEOTIDE SEQUENCE [MRNA] (ISOFORMS 1 AND 2)</scope>
    <scope>INDUCTION</scope>
    <scope>TISSUE SPECIFICITY</scope>
</reference>
<reference key="3">
    <citation type="journal article" date="2004" name="Nat. Genet.">
        <title>Complete sequencing and characterization of 21,243 full-length human cDNAs.</title>
        <authorList>
            <person name="Ota T."/>
            <person name="Suzuki Y."/>
            <person name="Nishikawa T."/>
            <person name="Otsuki T."/>
            <person name="Sugiyama T."/>
            <person name="Irie R."/>
            <person name="Wakamatsu A."/>
            <person name="Hayashi K."/>
            <person name="Sato H."/>
            <person name="Nagai K."/>
            <person name="Kimura K."/>
            <person name="Makita H."/>
            <person name="Sekine M."/>
            <person name="Obayashi M."/>
            <person name="Nishi T."/>
            <person name="Shibahara T."/>
            <person name="Tanaka T."/>
            <person name="Ishii S."/>
            <person name="Yamamoto J."/>
            <person name="Saito K."/>
            <person name="Kawai Y."/>
            <person name="Isono Y."/>
            <person name="Nakamura Y."/>
            <person name="Nagahari K."/>
            <person name="Murakami K."/>
            <person name="Yasuda T."/>
            <person name="Iwayanagi T."/>
            <person name="Wagatsuma M."/>
            <person name="Shiratori A."/>
            <person name="Sudo H."/>
            <person name="Hosoiri T."/>
            <person name="Kaku Y."/>
            <person name="Kodaira H."/>
            <person name="Kondo H."/>
            <person name="Sugawara M."/>
            <person name="Takahashi M."/>
            <person name="Kanda K."/>
            <person name="Yokoi T."/>
            <person name="Furuya T."/>
            <person name="Kikkawa E."/>
            <person name="Omura Y."/>
            <person name="Abe K."/>
            <person name="Kamihara K."/>
            <person name="Katsuta N."/>
            <person name="Sato K."/>
            <person name="Tanikawa M."/>
            <person name="Yamazaki M."/>
            <person name="Ninomiya K."/>
            <person name="Ishibashi T."/>
            <person name="Yamashita H."/>
            <person name="Murakawa K."/>
            <person name="Fujimori K."/>
            <person name="Tanai H."/>
            <person name="Kimata M."/>
            <person name="Watanabe M."/>
            <person name="Hiraoka S."/>
            <person name="Chiba Y."/>
            <person name="Ishida S."/>
            <person name="Ono Y."/>
            <person name="Takiguchi S."/>
            <person name="Watanabe S."/>
            <person name="Yosida M."/>
            <person name="Hotuta T."/>
            <person name="Kusano J."/>
            <person name="Kanehori K."/>
            <person name="Takahashi-Fujii A."/>
            <person name="Hara H."/>
            <person name="Tanase T.-O."/>
            <person name="Nomura Y."/>
            <person name="Togiya S."/>
            <person name="Komai F."/>
            <person name="Hara R."/>
            <person name="Takeuchi K."/>
            <person name="Arita M."/>
            <person name="Imose N."/>
            <person name="Musashino K."/>
            <person name="Yuuki H."/>
            <person name="Oshima A."/>
            <person name="Sasaki N."/>
            <person name="Aotsuka S."/>
            <person name="Yoshikawa Y."/>
            <person name="Matsunawa H."/>
            <person name="Ichihara T."/>
            <person name="Shiohata N."/>
            <person name="Sano S."/>
            <person name="Moriya S."/>
            <person name="Momiyama H."/>
            <person name="Satoh N."/>
            <person name="Takami S."/>
            <person name="Terashima Y."/>
            <person name="Suzuki O."/>
            <person name="Nakagawa S."/>
            <person name="Senoh A."/>
            <person name="Mizoguchi H."/>
            <person name="Goto Y."/>
            <person name="Shimizu F."/>
            <person name="Wakebe H."/>
            <person name="Hishigaki H."/>
            <person name="Watanabe T."/>
            <person name="Sugiyama A."/>
            <person name="Takemoto M."/>
            <person name="Kawakami B."/>
            <person name="Yamazaki M."/>
            <person name="Watanabe K."/>
            <person name="Kumagai A."/>
            <person name="Itakura S."/>
            <person name="Fukuzumi Y."/>
            <person name="Fujimori Y."/>
            <person name="Komiyama M."/>
            <person name="Tashiro H."/>
            <person name="Tanigami A."/>
            <person name="Fujiwara T."/>
            <person name="Ono T."/>
            <person name="Yamada K."/>
            <person name="Fujii Y."/>
            <person name="Ozaki K."/>
            <person name="Hirao M."/>
            <person name="Ohmori Y."/>
            <person name="Kawabata A."/>
            <person name="Hikiji T."/>
            <person name="Kobatake N."/>
            <person name="Inagaki H."/>
            <person name="Ikema Y."/>
            <person name="Okamoto S."/>
            <person name="Okitani R."/>
            <person name="Kawakami T."/>
            <person name="Noguchi S."/>
            <person name="Itoh T."/>
            <person name="Shigeta K."/>
            <person name="Senba T."/>
            <person name="Matsumura K."/>
            <person name="Nakajima Y."/>
            <person name="Mizuno T."/>
            <person name="Morinaga M."/>
            <person name="Sasaki M."/>
            <person name="Togashi T."/>
            <person name="Oyama M."/>
            <person name="Hata H."/>
            <person name="Watanabe M."/>
            <person name="Komatsu T."/>
            <person name="Mizushima-Sugano J."/>
            <person name="Satoh T."/>
            <person name="Shirai Y."/>
            <person name="Takahashi Y."/>
            <person name="Nakagawa K."/>
            <person name="Okumura K."/>
            <person name="Nagase T."/>
            <person name="Nomura N."/>
            <person name="Kikuchi H."/>
            <person name="Masuho Y."/>
            <person name="Yamashita R."/>
            <person name="Nakai K."/>
            <person name="Yada T."/>
            <person name="Nakamura Y."/>
            <person name="Ohara O."/>
            <person name="Isogai T."/>
            <person name="Sugano S."/>
        </authorList>
    </citation>
    <scope>NUCLEOTIDE SEQUENCE [LARGE SCALE MRNA] (ISOFORM 1)</scope>
    <source>
        <tissue>Trachea</tissue>
    </source>
</reference>
<reference key="4">
    <citation type="submission" date="2005-07" db="EMBL/GenBank/DDBJ databases">
        <authorList>
            <person name="Mural R.J."/>
            <person name="Istrail S."/>
            <person name="Sutton G.G."/>
            <person name="Florea L."/>
            <person name="Halpern A.L."/>
            <person name="Mobarry C.M."/>
            <person name="Lippert R."/>
            <person name="Walenz B."/>
            <person name="Shatkay H."/>
            <person name="Dew I."/>
            <person name="Miller J.R."/>
            <person name="Flanigan M.J."/>
            <person name="Edwards N.J."/>
            <person name="Bolanos R."/>
            <person name="Fasulo D."/>
            <person name="Halldorsson B.V."/>
            <person name="Hannenhalli S."/>
            <person name="Turner R."/>
            <person name="Yooseph S."/>
            <person name="Lu F."/>
            <person name="Nusskern D.R."/>
            <person name="Shue B.C."/>
            <person name="Zheng X.H."/>
            <person name="Zhong F."/>
            <person name="Delcher A.L."/>
            <person name="Huson D.H."/>
            <person name="Kravitz S.A."/>
            <person name="Mouchard L."/>
            <person name="Reinert K."/>
            <person name="Remington K.A."/>
            <person name="Clark A.G."/>
            <person name="Waterman M.S."/>
            <person name="Eichler E.E."/>
            <person name="Adams M.D."/>
            <person name="Hunkapiller M.W."/>
            <person name="Myers E.W."/>
            <person name="Venter J.C."/>
        </authorList>
    </citation>
    <scope>NUCLEOTIDE SEQUENCE [LARGE SCALE GENOMIC DNA]</scope>
</reference>
<reference key="5">
    <citation type="journal article" date="2004" name="Genome Res.">
        <title>The status, quality, and expansion of the NIH full-length cDNA project: the Mammalian Gene Collection (MGC).</title>
        <authorList>
            <consortium name="The MGC Project Team"/>
        </authorList>
    </citation>
    <scope>NUCLEOTIDE SEQUENCE [LARGE SCALE MRNA] (ISOFORM 1)</scope>
    <source>
        <tissue>Lung</tissue>
    </source>
</reference>
<reference key="6">
    <citation type="journal article" date="2003" name="J. Biol. Chem.">
        <title>TP53INP1s and homeodomain-interacting protein kinase-2 (HIPK2) are partners in regulating p53 activity.</title>
        <authorList>
            <person name="Tomasini R."/>
            <person name="Samir A.A."/>
            <person name="Carrier A."/>
            <person name="Isnardon D."/>
            <person name="Cecchinelli B."/>
            <person name="Soddu S."/>
            <person name="Malissen B."/>
            <person name="Dagorn J.-C."/>
            <person name="Iovanna J.L."/>
            <person name="Dusetti N.J."/>
        </authorList>
    </citation>
    <scope>INTERACTION WITH TP53 AND HIPK2</scope>
    <scope>SUBCELLULAR LOCATION</scope>
</reference>
<reference key="7">
    <citation type="journal article" date="2006" name="J. Biol. Chem.">
        <title>Protein kinase C delta regulates Ser46 phosphorylation of p53 tumor suppressor in the apoptotic response to DNA damage.</title>
        <authorList>
            <person name="Yoshida K."/>
            <person name="Liu H."/>
            <person name="Miki Y."/>
        </authorList>
    </citation>
    <scope>INTERACTION WITH PRKCG</scope>
</reference>
<reference key="8">
    <citation type="journal article" date="2012" name="Cell Death Differ.">
        <title>TP53INP1, a tumor suppressor, interacts with LC3 and ATG8-family proteins through the LC3-interacting region (LIR) and promotes autophagy-dependent cell death.</title>
        <authorList>
            <person name="Seillier M."/>
            <person name="Peuget S."/>
            <person name="Gayet O."/>
            <person name="Gauthier C."/>
            <person name="N'guessan P."/>
            <person name="Monte M."/>
            <person name="Carrier A."/>
            <person name="Iovanna J.L."/>
            <person name="Dusetti N.J."/>
        </authorList>
    </citation>
    <scope>FUNCTION</scope>
    <scope>INTERACTION WITH GABARAP; GABARAPL2 AND MAP1LC3A</scope>
</reference>
<reference key="9">
    <citation type="journal article" date="2012" name="PLoS ONE">
        <title>DOR/Tp53inp2 and Tp53inp1 constitute a metazoan gene family encoding dual regulators of autophagy and transcription.</title>
        <authorList>
            <person name="Sancho A."/>
            <person name="Duran J."/>
            <person name="Garcia-Espana A."/>
            <person name="Mauvezin C."/>
            <person name="Alemu E.A."/>
            <person name="Lamark T."/>
            <person name="Macias M.J."/>
            <person name="Desalle R."/>
            <person name="Royo M."/>
            <person name="Sala D."/>
            <person name="Chicote J.U."/>
            <person name="Palacin M."/>
            <person name="Johansen T."/>
            <person name="Zorzano A."/>
        </authorList>
    </citation>
    <scope>FUNCTION</scope>
    <scope>SUBCELLULAR LOCATION</scope>
    <scope>INTERACTION WITH GABARAP; GABARAPL1; GABARAPL2; MAP1LC3A; MAP1LC3B AND MAP1LC3C</scope>
</reference>
<sequence length="240" mass="27366">MFQRLNKMFVGEVSSSSNQEPEFNEKEDDEWILVDFIDTCTGFSAEEEEEEEDISEESPTEHPSVFSCLPASLECLADTSDSCFLQFESCPMEESWFITPPPCFTAGGLTTIKVETSPMENLLIEHPSMSVYAVHNSCPGLSEATRGTDELHSPSSPRVEAQNEMGQHIHCYVAALAAHTTFLEQPKSFRPSQWIKEHSERQPLNRNSLRRQNLTRDCHPRQVKHNGWVVHQPCPRQYNY</sequence>
<proteinExistence type="evidence at protein level"/>
<comment type="function">
    <text evidence="1 5 6">Antiproliferative and proapoptotic protein involved in cell stress response which acts as a dual regulator of transcription and autophagy. Acts as a positive regulator of autophagy. In response to cellular stress or activation of autophagy, relocates to autophagosomes where it interacts with autophagosome-associated proteins GABARAP, GABARAPL1/L2, MAP1LC3A/B/C and regulates autophagy. Acts as an antioxidant and plays a major role in p53/TP53-driven oxidative stress response. Possesses both a p53/TP53-independent intracellular reactive oxygen species (ROS) regulatory function and a p53/TP53-dependent transcription regulatory function. Positively regulates p53/TP53 and p73/TP73 and stimulates their capacity to induce apoptosis and regulate cell cycle. In response to double-strand DNA breaks, promotes p53/TP53 phosphorylation on 'Ser-46' and subsequent apoptosis. Acts as a tumor suppressor by inducing cell death by an autophagy and caspase-dependent mechanism. Can reduce cell migration by regulating the expression of SPARC.</text>
</comment>
<comment type="subunit">
    <text evidence="3 4 5 6">Interacts with p53/TP53 and HIPK2. Interacts with PRKCG, GABARAP, GABARAPL1, GABARAPL2, MAP1LC3A, MAP1LC3B and MAP1LC3C.</text>
</comment>
<comment type="interaction">
    <interactant intactId="EBI-9986117">
        <id>Q96A56</id>
    </interactant>
    <interactant intactId="EBI-712001">
        <id>O95166</id>
        <label>GABARAP</label>
    </interactant>
    <organismsDiffer>false</organismsDiffer>
    <experiments>3</experiments>
</comment>
<comment type="interaction">
    <interactant intactId="EBI-9986117">
        <id>Q96A56</id>
    </interactant>
    <interactant intactId="EBI-746969">
        <id>Q9H0R8</id>
        <label>GABARAPL1</label>
    </interactant>
    <organismsDiffer>false</organismsDiffer>
    <experiments>9</experiments>
</comment>
<comment type="interaction">
    <interactant intactId="EBI-9986117">
        <id>Q96A56</id>
    </interactant>
    <interactant intactId="EBI-720116">
        <id>P60520</id>
        <label>GABARAPL2</label>
    </interactant>
    <organismsDiffer>false</organismsDiffer>
    <experiments>6</experiments>
</comment>
<comment type="interaction">
    <interactant intactId="EBI-9986117">
        <id>Q96A56</id>
    </interactant>
    <interactant intactId="EBI-2603996">
        <id>Q9BXW4</id>
        <label>MAP1LC3C</label>
    </interactant>
    <organismsDiffer>false</organismsDiffer>
    <experiments>3</experiments>
</comment>
<comment type="interaction">
    <interactant intactId="EBI-9986117">
        <id>Q96A56</id>
    </interactant>
    <interactant intactId="EBI-8652744">
        <id>Q96IW7</id>
        <label>SEC22A</label>
    </interactant>
    <organismsDiffer>false</organismsDiffer>
    <experiments>3</experiments>
</comment>
<comment type="interaction">
    <interactant intactId="EBI-9986117">
        <id>Q96A56</id>
    </interactant>
    <interactant intactId="EBI-711260">
        <id>Q13432</id>
        <label>UNC119</label>
    </interactant>
    <organismsDiffer>false</organismsDiffer>
    <experiments>3</experiments>
</comment>
<comment type="subcellular location">
    <subcellularLocation>
        <location>Cytoplasm</location>
        <location>Cytosol</location>
    </subcellularLocation>
    <subcellularLocation>
        <location>Nucleus</location>
    </subcellularLocation>
    <subcellularLocation>
        <location>Nucleus</location>
        <location>PML body</location>
    </subcellularLocation>
    <subcellularLocation>
        <location>Cytoplasmic vesicle</location>
        <location>Autophagosome</location>
    </subcellularLocation>
    <text>Shuttles between the nucleus and the cytoplasm, depending on cellular stress conditions, and re-localizes to autophagosomes on autophagy activation.</text>
</comment>
<comment type="alternative products">
    <event type="alternative splicing"/>
    <isoform>
        <id>Q96A56-1</id>
        <name>1</name>
        <name>p53DINP1a</name>
        <name>alpha</name>
        <name>SIP27</name>
        <name>TEAP</name>
        <sequence type="displayed"/>
    </isoform>
    <isoform>
        <id>Q96A56-2</id>
        <name>2</name>
        <name>p53DINP1b</name>
        <name>beta</name>
        <name>SIP18</name>
        <sequence type="described" ref="VSP_013176"/>
    </isoform>
</comment>
<comment type="tissue specificity">
    <text evidence="1 2">Ubiquitously expressed.</text>
</comment>
<comment type="induction">
    <text evidence="1 2">By adriamycin, gamma irradiation and H(2)O(2), in a p53/TP53-dependent way. At lower levels by UV irradiation. By TP73.</text>
</comment>
<comment type="domain">
    <text>The LC3 interacting region (LIR) motif mediates interaction with GABARAP, GABARAPL1, GABARAPL2, MAP1LC3A, MAP1LC3B and MAP1LC3C.</text>
</comment>
<comment type="online information" name="Atlas of Genetics and Cytogenetics in Oncology and Haematology">
    <link uri="https://atlasgeneticsoncology.org/gene/42672/TP53INP1"/>
</comment>
<dbReference type="EMBL" id="AB017926">
    <property type="protein sequence ID" value="BAB62149.1"/>
    <property type="molecule type" value="mRNA"/>
</dbReference>
<dbReference type="EMBL" id="AB017927">
    <property type="protein sequence ID" value="BAB62150.1"/>
    <property type="molecule type" value="mRNA"/>
</dbReference>
<dbReference type="EMBL" id="AB062056">
    <property type="protein sequence ID" value="BAB62151.1"/>
    <property type="molecule type" value="Genomic_DNA"/>
</dbReference>
<dbReference type="EMBL" id="AB062056">
    <property type="protein sequence ID" value="BAB62152.1"/>
    <property type="molecule type" value="Genomic_DNA"/>
</dbReference>
<dbReference type="EMBL" id="AF409114">
    <property type="protein sequence ID" value="AAL04513.1"/>
    <property type="molecule type" value="mRNA"/>
</dbReference>
<dbReference type="EMBL" id="AF409115">
    <property type="protein sequence ID" value="AAL04514.1"/>
    <property type="molecule type" value="mRNA"/>
</dbReference>
<dbReference type="EMBL" id="AK315071">
    <property type="protein sequence ID" value="BAG37542.1"/>
    <property type="molecule type" value="mRNA"/>
</dbReference>
<dbReference type="EMBL" id="CH471060">
    <property type="protein sequence ID" value="EAW91740.1"/>
    <property type="molecule type" value="Genomic_DNA"/>
</dbReference>
<dbReference type="EMBL" id="BC074813">
    <property type="protein sequence ID" value="AAH74813.1"/>
    <property type="molecule type" value="mRNA"/>
</dbReference>
<dbReference type="EMBL" id="BC074868">
    <property type="protein sequence ID" value="AAH74868.1"/>
    <property type="molecule type" value="mRNA"/>
</dbReference>
<dbReference type="CCDS" id="CCDS47899.1">
    <molecule id="Q96A56-2"/>
</dbReference>
<dbReference type="CCDS" id="CCDS6265.1">
    <molecule id="Q96A56-1"/>
</dbReference>
<dbReference type="RefSeq" id="NP_001129205.1">
    <molecule id="Q96A56-2"/>
    <property type="nucleotide sequence ID" value="NM_001135733.2"/>
</dbReference>
<dbReference type="RefSeq" id="NP_150601.1">
    <molecule id="Q96A56-1"/>
    <property type="nucleotide sequence ID" value="NM_033285.4"/>
</dbReference>
<dbReference type="RefSeq" id="XP_011515688.1">
    <molecule id="Q96A56-1"/>
    <property type="nucleotide sequence ID" value="XM_011517386.3"/>
</dbReference>
<dbReference type="RefSeq" id="XP_054217512.1">
    <molecule id="Q96A56-1"/>
    <property type="nucleotide sequence ID" value="XM_054361537.1"/>
</dbReference>
<dbReference type="BioGRID" id="125152">
    <property type="interactions" value="33"/>
</dbReference>
<dbReference type="FunCoup" id="Q96A56">
    <property type="interactions" value="3197"/>
</dbReference>
<dbReference type="IntAct" id="Q96A56">
    <property type="interactions" value="13"/>
</dbReference>
<dbReference type="STRING" id="9606.ENSP00000344215"/>
<dbReference type="iPTMnet" id="Q96A56"/>
<dbReference type="PhosphoSitePlus" id="Q96A56"/>
<dbReference type="BioMuta" id="TP53INP1"/>
<dbReference type="DMDM" id="61216823"/>
<dbReference type="MassIVE" id="Q96A56"/>
<dbReference type="PaxDb" id="9606-ENSP00000344215"/>
<dbReference type="PeptideAtlas" id="Q96A56"/>
<dbReference type="ProteomicsDB" id="75914">
    <molecule id="Q96A56-1"/>
</dbReference>
<dbReference type="ProteomicsDB" id="75915">
    <molecule id="Q96A56-2"/>
</dbReference>
<dbReference type="Antibodypedia" id="12951">
    <property type="antibodies" value="348 antibodies from 39 providers"/>
</dbReference>
<dbReference type="DNASU" id="94241"/>
<dbReference type="Ensembl" id="ENST00000342697.5">
    <molecule id="Q96A56-1"/>
    <property type="protein sequence ID" value="ENSP00000344215.4"/>
    <property type="gene ID" value="ENSG00000164938.14"/>
</dbReference>
<dbReference type="Ensembl" id="ENST00000448464.6">
    <molecule id="Q96A56-2"/>
    <property type="protein sequence ID" value="ENSP00000390063.2"/>
    <property type="gene ID" value="ENSG00000164938.14"/>
</dbReference>
<dbReference type="GeneID" id="94241"/>
<dbReference type="KEGG" id="hsa:94241"/>
<dbReference type="MANE-Select" id="ENST00000342697.5">
    <property type="protein sequence ID" value="ENSP00000344215.4"/>
    <property type="RefSeq nucleotide sequence ID" value="NM_033285.4"/>
    <property type="RefSeq protein sequence ID" value="NP_150601.1"/>
</dbReference>
<dbReference type="UCSC" id="uc003yhg.4">
    <molecule id="Q96A56-1"/>
    <property type="organism name" value="human"/>
</dbReference>
<dbReference type="AGR" id="HGNC:18022"/>
<dbReference type="CTD" id="94241"/>
<dbReference type="DisGeNET" id="94241"/>
<dbReference type="GeneCards" id="TP53INP1"/>
<dbReference type="HGNC" id="HGNC:18022">
    <property type="gene designation" value="TP53INP1"/>
</dbReference>
<dbReference type="HPA" id="ENSG00000164938">
    <property type="expression patterns" value="Tissue enhanced (liver)"/>
</dbReference>
<dbReference type="MIM" id="606185">
    <property type="type" value="gene"/>
</dbReference>
<dbReference type="neXtProt" id="NX_Q96A56"/>
<dbReference type="OpenTargets" id="ENSG00000164938"/>
<dbReference type="PharmGKB" id="PA38278"/>
<dbReference type="VEuPathDB" id="HostDB:ENSG00000164938"/>
<dbReference type="eggNOG" id="ENOG502QTG4">
    <property type="taxonomic scope" value="Eukaryota"/>
</dbReference>
<dbReference type="GeneTree" id="ENSGT00530000063829"/>
<dbReference type="HOGENOM" id="CLU_091034_1_0_1"/>
<dbReference type="InParanoid" id="Q96A56"/>
<dbReference type="OMA" id="VGQHIHC"/>
<dbReference type="OrthoDB" id="10041339at2759"/>
<dbReference type="PAN-GO" id="Q96A56">
    <property type="GO annotations" value="4 GO annotations based on evolutionary models"/>
</dbReference>
<dbReference type="PhylomeDB" id="Q96A56"/>
<dbReference type="TreeFam" id="TF333017"/>
<dbReference type="PathwayCommons" id="Q96A56"/>
<dbReference type="Reactome" id="R-HSA-6803204">
    <property type="pathway name" value="TP53 Regulates Transcription of Genes Involved in Cytochrome C Release"/>
</dbReference>
<dbReference type="Reactome" id="R-HSA-6804756">
    <property type="pathway name" value="Regulation of TP53 Activity through Phosphorylation"/>
</dbReference>
<dbReference type="SignaLink" id="Q96A56"/>
<dbReference type="SIGNOR" id="Q96A56"/>
<dbReference type="BioGRID-ORCS" id="94241">
    <property type="hits" value="4 hits in 1160 CRISPR screens"/>
</dbReference>
<dbReference type="ChiTaRS" id="TP53INP1">
    <property type="organism name" value="human"/>
</dbReference>
<dbReference type="GeneWiki" id="TP53INP1"/>
<dbReference type="GenomeRNAi" id="94241"/>
<dbReference type="Pharos" id="Q96A56">
    <property type="development level" value="Tbio"/>
</dbReference>
<dbReference type="PRO" id="PR:Q96A56"/>
<dbReference type="Proteomes" id="UP000005640">
    <property type="component" value="Chromosome 8"/>
</dbReference>
<dbReference type="RNAct" id="Q96A56">
    <property type="molecule type" value="protein"/>
</dbReference>
<dbReference type="Bgee" id="ENSG00000164938">
    <property type="expression patterns" value="Expressed in oviduct epithelium and 191 other cell types or tissues"/>
</dbReference>
<dbReference type="ExpressionAtlas" id="Q96A56">
    <property type="expression patterns" value="baseline and differential"/>
</dbReference>
<dbReference type="GO" id="GO:0005776">
    <property type="term" value="C:autophagosome"/>
    <property type="evidence" value="ECO:0000314"/>
    <property type="project" value="UniProtKB"/>
</dbReference>
<dbReference type="GO" id="GO:0031410">
    <property type="term" value="C:cytoplasmic vesicle"/>
    <property type="evidence" value="ECO:0007669"/>
    <property type="project" value="UniProtKB-KW"/>
</dbReference>
<dbReference type="GO" id="GO:0005829">
    <property type="term" value="C:cytosol"/>
    <property type="evidence" value="ECO:0000314"/>
    <property type="project" value="HPA"/>
</dbReference>
<dbReference type="GO" id="GO:0005654">
    <property type="term" value="C:nucleoplasm"/>
    <property type="evidence" value="ECO:0000304"/>
    <property type="project" value="Reactome"/>
</dbReference>
<dbReference type="GO" id="GO:0005634">
    <property type="term" value="C:nucleus"/>
    <property type="evidence" value="ECO:0000314"/>
    <property type="project" value="UniProtKB"/>
</dbReference>
<dbReference type="GO" id="GO:0016605">
    <property type="term" value="C:PML body"/>
    <property type="evidence" value="ECO:0007669"/>
    <property type="project" value="UniProtKB-SubCell"/>
</dbReference>
<dbReference type="GO" id="GO:0016209">
    <property type="term" value="F:antioxidant activity"/>
    <property type="evidence" value="ECO:0000250"/>
    <property type="project" value="UniProtKB"/>
</dbReference>
<dbReference type="GO" id="GO:0006915">
    <property type="term" value="P:apoptotic process"/>
    <property type="evidence" value="ECO:0007669"/>
    <property type="project" value="UniProtKB-KW"/>
</dbReference>
<dbReference type="GO" id="GO:0048102">
    <property type="term" value="P:autophagic cell death"/>
    <property type="evidence" value="ECO:0000315"/>
    <property type="project" value="UniProtKB"/>
</dbReference>
<dbReference type="GO" id="GO:0000045">
    <property type="term" value="P:autophagosome assembly"/>
    <property type="evidence" value="ECO:0000318"/>
    <property type="project" value="GO_Central"/>
</dbReference>
<dbReference type="GO" id="GO:0071361">
    <property type="term" value="P:cellular response to ethanol"/>
    <property type="evidence" value="ECO:0007669"/>
    <property type="project" value="Ensembl"/>
</dbReference>
<dbReference type="GO" id="GO:0071447">
    <property type="term" value="P:cellular response to hydroperoxide"/>
    <property type="evidence" value="ECO:0007669"/>
    <property type="project" value="Ensembl"/>
</dbReference>
<dbReference type="GO" id="GO:0072703">
    <property type="term" value="P:cellular response to methyl methanesulfonate"/>
    <property type="evidence" value="ECO:0007669"/>
    <property type="project" value="Ensembl"/>
</dbReference>
<dbReference type="GO" id="GO:0034644">
    <property type="term" value="P:cellular response to UV"/>
    <property type="evidence" value="ECO:0007669"/>
    <property type="project" value="Ensembl"/>
</dbReference>
<dbReference type="GO" id="GO:0030336">
    <property type="term" value="P:negative regulation of cell migration"/>
    <property type="evidence" value="ECO:0000250"/>
    <property type="project" value="UniProtKB"/>
</dbReference>
<dbReference type="GO" id="GO:0008285">
    <property type="term" value="P:negative regulation of cell population proliferation"/>
    <property type="evidence" value="ECO:0000250"/>
    <property type="project" value="UniProtKB"/>
</dbReference>
<dbReference type="GO" id="GO:0048147">
    <property type="term" value="P:negative regulation of fibroblast proliferation"/>
    <property type="evidence" value="ECO:0007669"/>
    <property type="project" value="Ensembl"/>
</dbReference>
<dbReference type="GO" id="GO:0010629">
    <property type="term" value="P:negative regulation of gene expression"/>
    <property type="evidence" value="ECO:0007669"/>
    <property type="project" value="Ensembl"/>
</dbReference>
<dbReference type="GO" id="GO:1904761">
    <property type="term" value="P:negative regulation of myofibroblast differentiation"/>
    <property type="evidence" value="ECO:0007669"/>
    <property type="project" value="Ensembl"/>
</dbReference>
<dbReference type="GO" id="GO:0043065">
    <property type="term" value="P:positive regulation of apoptotic process"/>
    <property type="evidence" value="ECO:0007669"/>
    <property type="project" value="Ensembl"/>
</dbReference>
<dbReference type="GO" id="GO:0010508">
    <property type="term" value="P:positive regulation of autophagy"/>
    <property type="evidence" value="ECO:0000315"/>
    <property type="project" value="UniProtKB"/>
</dbReference>
<dbReference type="GO" id="GO:0045893">
    <property type="term" value="P:positive regulation of DNA-templated transcription"/>
    <property type="evidence" value="ECO:0000314"/>
    <property type="project" value="UniProtKB"/>
</dbReference>
<dbReference type="GO" id="GO:0010628">
    <property type="term" value="P:positive regulation of gene expression"/>
    <property type="evidence" value="ECO:0007669"/>
    <property type="project" value="Ensembl"/>
</dbReference>
<dbReference type="GO" id="GO:0051726">
    <property type="term" value="P:regulation of cell cycle"/>
    <property type="evidence" value="ECO:0000304"/>
    <property type="project" value="UniProtKB"/>
</dbReference>
<dbReference type="GO" id="GO:0009408">
    <property type="term" value="P:response to heat"/>
    <property type="evidence" value="ECO:0007669"/>
    <property type="project" value="Ensembl"/>
</dbReference>
<dbReference type="InterPro" id="IPR029431">
    <property type="entry name" value="TP53INP"/>
</dbReference>
<dbReference type="PANTHER" id="PTHR31671">
    <property type="entry name" value="DIABETES AND OBESITY REGULATED, ISOFORM G"/>
    <property type="match status" value="1"/>
</dbReference>
<dbReference type="PANTHER" id="PTHR31671:SF0">
    <property type="entry name" value="TUMOR PROTEIN P53-INDUCIBLE NUCLEAR PROTEIN 1"/>
    <property type="match status" value="1"/>
</dbReference>
<dbReference type="Pfam" id="PF14839">
    <property type="entry name" value="DOR"/>
    <property type="match status" value="1"/>
</dbReference>
<feature type="chain" id="PRO_0000072406" description="Tumor protein p53-inducible nuclear protein 1">
    <location>
        <begin position="1"/>
        <end position="240"/>
    </location>
</feature>
<feature type="short sequence motif" description="LIR">
    <location>
        <begin position="25"/>
        <end position="37"/>
    </location>
</feature>
<feature type="splice variant" id="VSP_013176" description="In isoform 2." evidence="7 8">
    <original>VEAQNEMGQHIHCYVAALAAHTTFLEQPKSFRPSQWIKEHSERQPLNRNSLRRQNLTRDCHPRQVKHNGWVVHQPCPRQYNY</original>
    <variation>ARKSCL</variation>
    <location>
        <begin position="159"/>
        <end position="240"/>
    </location>
</feature>
<feature type="sequence variant" id="VAR_051404" description="In dbSNP:rs11991800.">
    <original>C</original>
    <variation>R</variation>
    <location>
        <position position="75"/>
    </location>
</feature>
<keyword id="KW-0010">Activator</keyword>
<keyword id="KW-0025">Alternative splicing</keyword>
<keyword id="KW-0049">Antioxidant</keyword>
<keyword id="KW-0053">Apoptosis</keyword>
<keyword id="KW-0072">Autophagy</keyword>
<keyword id="KW-0963">Cytoplasm</keyword>
<keyword id="KW-0968">Cytoplasmic vesicle</keyword>
<keyword id="KW-0539">Nucleus</keyword>
<keyword id="KW-1267">Proteomics identification</keyword>
<keyword id="KW-1185">Reference proteome</keyword>
<keyword id="KW-0804">Transcription</keyword>
<keyword id="KW-0805">Transcription regulation</keyword>
<keyword id="KW-0043">Tumor suppressor</keyword>
<name>T53I1_HUMAN</name>
<gene>
    <name type="primary">TP53INP1</name>
    <name type="synonym">P53DINP1</name>
    <name type="synonym">SIP</name>
</gene>
<protein>
    <recommendedName>
        <fullName>Tumor protein p53-inducible nuclear protein 1</fullName>
    </recommendedName>
    <alternativeName>
        <fullName>Stress-induced protein</fullName>
    </alternativeName>
    <alternativeName>
        <fullName>p53-dependent damage-inducible nuclear protein 1</fullName>
        <shortName>p53DINP1</shortName>
    </alternativeName>
</protein>
<evidence type="ECO:0000269" key="1">
    <source>
    </source>
</evidence>
<evidence type="ECO:0000269" key="2">
    <source>
    </source>
</evidence>
<evidence type="ECO:0000269" key="3">
    <source>
    </source>
</evidence>
<evidence type="ECO:0000269" key="4">
    <source>
    </source>
</evidence>
<evidence type="ECO:0000269" key="5">
    <source>
    </source>
</evidence>
<evidence type="ECO:0000269" key="6">
    <source>
    </source>
</evidence>
<evidence type="ECO:0000303" key="7">
    <source>
    </source>
</evidence>
<evidence type="ECO:0000303" key="8">
    <source>
    </source>
</evidence>